<reference key="1">
    <citation type="journal article" date="1997" name="Invertebr. Neurosci.">
        <title>cDNA cloning of a mandibular organ inhibiting hormone from the spider crab Libinia emarginata.</title>
        <authorList>
            <person name="Liu L."/>
            <person name="Laufer H."/>
            <person name="Gogarten P.J."/>
            <person name="Wang M."/>
        </authorList>
    </citation>
    <scope>NUCLEOTIDE SEQUENCE [MRNA]</scope>
    <source>
        <tissue>Eyestalk</tissue>
    </source>
</reference>
<reference key="2">
    <citation type="journal article" date="1997" name="Biochem. Biophys. Res. Commun.">
        <title>A neurohormone regulating both methyl farnesoate synthesis and glucose metabolism in a crustacean.</title>
        <authorList>
            <person name="Liu L."/>
            <person name="Laufer H."/>
            <person name="Wang Y."/>
            <person name="Hayes T."/>
        </authorList>
    </citation>
    <scope>PROTEIN SEQUENCE OF 63-134</scope>
    <scope>PYROGLUTAMATE FORMATION AT GLN-63</scope>
    <scope>MASS SPECTROMETRY</scope>
    <source>
        <tissue>Sinus gland</tissue>
    </source>
</reference>
<protein>
    <recommendedName>
        <fullName>Mandibular organ-inhibiting hormone</fullName>
        <shortName>MOIH</shortName>
    </recommendedName>
    <component>
        <recommendedName>
            <fullName>MOIH precursor-related peptide</fullName>
        </recommendedName>
    </component>
    <component>
        <recommendedName>
            <fullName>Mandibular organ-inhibiting hormone</fullName>
        </recommendedName>
    </component>
</protein>
<sequence length="137" mass="15370">MTTKCTVMAVVLAACICLQVLPQAYGRSTQGYGRMDKLLATLMGSSEGGALESASQHSLEKRQIFDPSCKGLYDRGLFSDLEHVCKDCYNLYRNPQVTSACRVNCYSNRVFRQCMEDLLLMEDFDKYARAIQTVGKK</sequence>
<organism>
    <name type="scientific">Libinia emarginata</name>
    <name type="common">Portly spider crab</name>
    <dbReference type="NCBI Taxonomy" id="6807"/>
    <lineage>
        <taxon>Eukaryota</taxon>
        <taxon>Metazoa</taxon>
        <taxon>Ecdysozoa</taxon>
        <taxon>Arthropoda</taxon>
        <taxon>Crustacea</taxon>
        <taxon>Multicrustacea</taxon>
        <taxon>Malacostraca</taxon>
        <taxon>Eumalacostraca</taxon>
        <taxon>Eucarida</taxon>
        <taxon>Decapoda</taxon>
        <taxon>Pleocyemata</taxon>
        <taxon>Brachyura</taxon>
        <taxon>Eubrachyura</taxon>
        <taxon>Majoidea</taxon>
        <taxon>Majidae</taxon>
        <taxon>Libinia</taxon>
    </lineage>
</organism>
<dbReference type="EMBL" id="AF144660">
    <property type="protein sequence ID" value="AAD32706.1"/>
    <property type="molecule type" value="mRNA"/>
</dbReference>
<dbReference type="PIR" id="JC5628">
    <property type="entry name" value="JC5628"/>
</dbReference>
<dbReference type="SMR" id="P56688"/>
<dbReference type="GO" id="GO:0005576">
    <property type="term" value="C:extracellular region"/>
    <property type="evidence" value="ECO:0007669"/>
    <property type="project" value="UniProtKB-SubCell"/>
</dbReference>
<dbReference type="GO" id="GO:0005184">
    <property type="term" value="F:neuropeptide hormone activity"/>
    <property type="evidence" value="ECO:0007669"/>
    <property type="project" value="InterPro"/>
</dbReference>
<dbReference type="GO" id="GO:0007623">
    <property type="term" value="P:circadian rhythm"/>
    <property type="evidence" value="ECO:0007669"/>
    <property type="project" value="TreeGrafter"/>
</dbReference>
<dbReference type="GO" id="GO:0007218">
    <property type="term" value="P:neuropeptide signaling pathway"/>
    <property type="evidence" value="ECO:0007669"/>
    <property type="project" value="UniProtKB-KW"/>
</dbReference>
<dbReference type="Gene3D" id="1.10.2010.10">
    <property type="entry name" value="Crustacean CHH/MIH/GIH neurohormone"/>
    <property type="match status" value="1"/>
</dbReference>
<dbReference type="InterPro" id="IPR018251">
    <property type="entry name" value="Crust_neurhormone_CS"/>
</dbReference>
<dbReference type="InterPro" id="IPR005558">
    <property type="entry name" value="Crust_neurhormone_H"/>
</dbReference>
<dbReference type="InterPro" id="IPR031098">
    <property type="entry name" value="Crust_neurohorm"/>
</dbReference>
<dbReference type="InterPro" id="IPR035957">
    <property type="entry name" value="Crust_neurohorm_sf"/>
</dbReference>
<dbReference type="InterPro" id="IPR001166">
    <property type="entry name" value="Hyperglycemic"/>
</dbReference>
<dbReference type="InterPro" id="IPR000346">
    <property type="entry name" value="Hyperglycemic1"/>
</dbReference>
<dbReference type="PANTHER" id="PTHR35981">
    <property type="entry name" value="ION TRANSPORT PEPTIDE, ISOFORM C"/>
    <property type="match status" value="1"/>
</dbReference>
<dbReference type="PANTHER" id="PTHR35981:SF2">
    <property type="entry name" value="ION TRANSPORT PEPTIDE, ISOFORM C"/>
    <property type="match status" value="1"/>
</dbReference>
<dbReference type="Pfam" id="PF03858">
    <property type="entry name" value="Crust_neuro_H"/>
    <property type="match status" value="1"/>
</dbReference>
<dbReference type="Pfam" id="PF01147">
    <property type="entry name" value="Crust_neurohorm"/>
    <property type="match status" value="1"/>
</dbReference>
<dbReference type="PRINTS" id="PR00548">
    <property type="entry name" value="HYPRGLYCEMC1"/>
</dbReference>
<dbReference type="PRINTS" id="PR00550">
    <property type="entry name" value="HYPRGLYCEMIC"/>
</dbReference>
<dbReference type="SUPFAM" id="SSF81778">
    <property type="entry name" value="Crustacean CHH/MIH/GIH neurohormone"/>
    <property type="match status" value="1"/>
</dbReference>
<dbReference type="PROSITE" id="PS01250">
    <property type="entry name" value="CHH_MIH_GIH"/>
    <property type="match status" value="1"/>
</dbReference>
<proteinExistence type="evidence at protein level"/>
<evidence type="ECO:0000250" key="1"/>
<evidence type="ECO:0000255" key="2"/>
<evidence type="ECO:0000269" key="3">
    <source>
    </source>
</evidence>
<evidence type="ECO:0000305" key="4"/>
<keyword id="KW-0027">Amidation</keyword>
<keyword id="KW-0165">Cleavage on pair of basic residues</keyword>
<keyword id="KW-0903">Direct protein sequencing</keyword>
<keyword id="KW-1015">Disulfide bond</keyword>
<keyword id="KW-0372">Hormone</keyword>
<keyword id="KW-0527">Neuropeptide</keyword>
<keyword id="KW-0873">Pyrrolidone carboxylic acid</keyword>
<keyword id="KW-0964">Secreted</keyword>
<keyword id="KW-0732">Signal</keyword>
<name>MOIH_LIBEM</name>
<comment type="function">
    <text>Represses the synthesis of methyl farnesoate, the precursor of insect juvenile hormone III in the mandibular organ. Also has hyperglycemic activity.</text>
</comment>
<comment type="subcellular location">
    <subcellularLocation>
        <location>Secreted</location>
    </subcellularLocation>
</comment>
<comment type="tissue specificity">
    <text>Produced by the medulla terminalis X-organ in the eyestalks and transported to the sinus gland where it is stored and released.</text>
</comment>
<comment type="mass spectrometry" mass="8492.5" error="3.0" method="MALDI" evidence="3">
    <molecule>Mandibular organ-inhibiting hormone</molecule>
</comment>
<comment type="similarity">
    <text evidence="4">Belongs to the arthropod CHH/MIH/GIH/VIH hormone family.</text>
</comment>
<accession>P56688</accession>
<feature type="signal peptide" evidence="2">
    <location>
        <begin position="1"/>
        <end position="26"/>
    </location>
</feature>
<feature type="peptide" id="PRO_0000019084" description="MOIH precursor-related peptide">
    <location>
        <begin position="27"/>
        <end position="60"/>
    </location>
</feature>
<feature type="chain" id="PRO_0000019085" description="Mandibular organ-inhibiting hormone">
    <location>
        <begin position="63"/>
        <end position="134"/>
    </location>
</feature>
<feature type="modified residue" description="Pyrrolidone carboxylic acid" evidence="3">
    <location>
        <position position="63"/>
    </location>
</feature>
<feature type="modified residue" description="Valine amide" evidence="2">
    <location>
        <position position="134"/>
    </location>
</feature>
<feature type="disulfide bond" evidence="1">
    <location>
        <begin position="69"/>
        <end position="105"/>
    </location>
</feature>
<feature type="disulfide bond" evidence="1">
    <location>
        <begin position="85"/>
        <end position="101"/>
    </location>
</feature>
<feature type="disulfide bond" evidence="1">
    <location>
        <begin position="88"/>
        <end position="114"/>
    </location>
</feature>